<proteinExistence type="inferred from homology"/>
<accession>Q65SH8</accession>
<sequence>MTKSELIESLVEKNHSISVKSVENAVKEILEHMSQALESGDRIEIRGFGSFSLHFRQPRVGRNPKTGAQVKLDAKCVPHFKAGKELRERVDFNA</sequence>
<reference key="1">
    <citation type="journal article" date="2004" name="Nat. Biotechnol.">
        <title>The genome sequence of the capnophilic rumen bacterium Mannheimia succiniciproducens.</title>
        <authorList>
            <person name="Hong S.H."/>
            <person name="Kim J.S."/>
            <person name="Lee S.Y."/>
            <person name="In Y.H."/>
            <person name="Choi S.S."/>
            <person name="Rih J.-K."/>
            <person name="Kim C.H."/>
            <person name="Jeong H."/>
            <person name="Hur C.G."/>
            <person name="Kim J.J."/>
        </authorList>
    </citation>
    <scope>NUCLEOTIDE SEQUENCE [LARGE SCALE GENOMIC DNA]</scope>
    <source>
        <strain>KCTC 0769BP / MBEL55E</strain>
    </source>
</reference>
<evidence type="ECO:0000255" key="1">
    <source>
        <dbReference type="HAMAP-Rule" id="MF_00381"/>
    </source>
</evidence>
<gene>
    <name evidence="1" type="primary">ihfB</name>
    <name evidence="1" type="synonym">himD</name>
    <name type="ordered locus">MS1475</name>
</gene>
<feature type="chain" id="PRO_1000060615" description="Integration host factor subunit beta">
    <location>
        <begin position="1"/>
        <end position="94"/>
    </location>
</feature>
<comment type="function">
    <text evidence="1">This protein is one of the two subunits of integration host factor, a specific DNA-binding protein that functions in genetic recombination as well as in transcriptional and translational control.</text>
</comment>
<comment type="subunit">
    <text evidence="1">Heterodimer of an alpha and a beta chain.</text>
</comment>
<comment type="similarity">
    <text evidence="1">Belongs to the bacterial histone-like protein family.</text>
</comment>
<dbReference type="EMBL" id="AE016827">
    <property type="protein sequence ID" value="AAU38082.1"/>
    <property type="molecule type" value="Genomic_DNA"/>
</dbReference>
<dbReference type="RefSeq" id="WP_011200648.1">
    <property type="nucleotide sequence ID" value="NC_006300.1"/>
</dbReference>
<dbReference type="SMR" id="Q65SH8"/>
<dbReference type="STRING" id="221988.MS1475"/>
<dbReference type="KEGG" id="msu:MS1475"/>
<dbReference type="eggNOG" id="COG0776">
    <property type="taxonomic scope" value="Bacteria"/>
</dbReference>
<dbReference type="HOGENOM" id="CLU_105066_2_0_6"/>
<dbReference type="OrthoDB" id="9804203at2"/>
<dbReference type="Proteomes" id="UP000000607">
    <property type="component" value="Chromosome"/>
</dbReference>
<dbReference type="GO" id="GO:0005694">
    <property type="term" value="C:chromosome"/>
    <property type="evidence" value="ECO:0007669"/>
    <property type="project" value="InterPro"/>
</dbReference>
<dbReference type="GO" id="GO:0005829">
    <property type="term" value="C:cytosol"/>
    <property type="evidence" value="ECO:0007669"/>
    <property type="project" value="TreeGrafter"/>
</dbReference>
<dbReference type="GO" id="GO:0003677">
    <property type="term" value="F:DNA binding"/>
    <property type="evidence" value="ECO:0007669"/>
    <property type="project" value="UniProtKB-UniRule"/>
</dbReference>
<dbReference type="GO" id="GO:0030527">
    <property type="term" value="F:structural constituent of chromatin"/>
    <property type="evidence" value="ECO:0007669"/>
    <property type="project" value="InterPro"/>
</dbReference>
<dbReference type="GO" id="GO:0006310">
    <property type="term" value="P:DNA recombination"/>
    <property type="evidence" value="ECO:0007669"/>
    <property type="project" value="UniProtKB-UniRule"/>
</dbReference>
<dbReference type="GO" id="GO:0006355">
    <property type="term" value="P:regulation of DNA-templated transcription"/>
    <property type="evidence" value="ECO:0007669"/>
    <property type="project" value="UniProtKB-UniRule"/>
</dbReference>
<dbReference type="GO" id="GO:0006417">
    <property type="term" value="P:regulation of translation"/>
    <property type="evidence" value="ECO:0007669"/>
    <property type="project" value="UniProtKB-UniRule"/>
</dbReference>
<dbReference type="CDD" id="cd13836">
    <property type="entry name" value="IHF_B"/>
    <property type="match status" value="1"/>
</dbReference>
<dbReference type="FunFam" id="4.10.520.10:FF:000003">
    <property type="entry name" value="Integration host factor subunit beta"/>
    <property type="match status" value="1"/>
</dbReference>
<dbReference type="Gene3D" id="4.10.520.10">
    <property type="entry name" value="IHF-like DNA-binding proteins"/>
    <property type="match status" value="1"/>
</dbReference>
<dbReference type="HAMAP" id="MF_00381">
    <property type="entry name" value="IHF_beta"/>
    <property type="match status" value="1"/>
</dbReference>
<dbReference type="InterPro" id="IPR000119">
    <property type="entry name" value="Hist_DNA-bd"/>
</dbReference>
<dbReference type="InterPro" id="IPR020816">
    <property type="entry name" value="Histone-like_DNA-bd_CS"/>
</dbReference>
<dbReference type="InterPro" id="IPR010992">
    <property type="entry name" value="IHF-like_DNA-bd_dom_sf"/>
</dbReference>
<dbReference type="InterPro" id="IPR005685">
    <property type="entry name" value="IHF_beta"/>
</dbReference>
<dbReference type="NCBIfam" id="TIGR00988">
    <property type="entry name" value="hip"/>
    <property type="match status" value="1"/>
</dbReference>
<dbReference type="NCBIfam" id="NF001222">
    <property type="entry name" value="PRK00199.1"/>
    <property type="match status" value="1"/>
</dbReference>
<dbReference type="PANTHER" id="PTHR33175">
    <property type="entry name" value="DNA-BINDING PROTEIN HU"/>
    <property type="match status" value="1"/>
</dbReference>
<dbReference type="PANTHER" id="PTHR33175:SF5">
    <property type="entry name" value="INTEGRATION HOST FACTOR SUBUNIT BETA"/>
    <property type="match status" value="1"/>
</dbReference>
<dbReference type="Pfam" id="PF00216">
    <property type="entry name" value="Bac_DNA_binding"/>
    <property type="match status" value="1"/>
</dbReference>
<dbReference type="PRINTS" id="PR01727">
    <property type="entry name" value="DNABINDINGHU"/>
</dbReference>
<dbReference type="SMART" id="SM00411">
    <property type="entry name" value="BHL"/>
    <property type="match status" value="1"/>
</dbReference>
<dbReference type="SUPFAM" id="SSF47729">
    <property type="entry name" value="IHF-like DNA-binding proteins"/>
    <property type="match status" value="1"/>
</dbReference>
<dbReference type="PROSITE" id="PS00045">
    <property type="entry name" value="HISTONE_LIKE"/>
    <property type="match status" value="1"/>
</dbReference>
<organism>
    <name type="scientific">Mannheimia succiniciproducens (strain KCTC 0769BP / MBEL55E)</name>
    <dbReference type="NCBI Taxonomy" id="221988"/>
    <lineage>
        <taxon>Bacteria</taxon>
        <taxon>Pseudomonadati</taxon>
        <taxon>Pseudomonadota</taxon>
        <taxon>Gammaproteobacteria</taxon>
        <taxon>Pasteurellales</taxon>
        <taxon>Pasteurellaceae</taxon>
        <taxon>Basfia</taxon>
    </lineage>
</organism>
<protein>
    <recommendedName>
        <fullName evidence="1">Integration host factor subunit beta</fullName>
        <shortName evidence="1">IHF-beta</shortName>
    </recommendedName>
</protein>
<name>IHFB_MANSM</name>
<keyword id="KW-0233">DNA recombination</keyword>
<keyword id="KW-0238">DNA-binding</keyword>
<keyword id="KW-0804">Transcription</keyword>
<keyword id="KW-0805">Transcription regulation</keyword>
<keyword id="KW-0810">Translation regulation</keyword>